<reference key="1">
    <citation type="journal article" date="2005" name="Nat. Biotechnol.">
        <title>Complete genome sequence of the acetic acid bacterium Gluconobacter oxydans.</title>
        <authorList>
            <person name="Prust C."/>
            <person name="Hoffmeister M."/>
            <person name="Liesegang H."/>
            <person name="Wiezer A."/>
            <person name="Fricke W.F."/>
            <person name="Ehrenreich A."/>
            <person name="Gottschalk G."/>
            <person name="Deppenmeier U."/>
        </authorList>
    </citation>
    <scope>NUCLEOTIDE SEQUENCE [LARGE SCALE GENOMIC DNA]</scope>
    <source>
        <strain>621H</strain>
    </source>
</reference>
<protein>
    <recommendedName>
        <fullName evidence="1">UDP-N-acetylglucosamine--N-acetylmuramyl-(pentapeptide) pyrophosphoryl-undecaprenol N-acetylglucosamine transferase</fullName>
        <ecNumber evidence="1">2.4.1.227</ecNumber>
    </recommendedName>
    <alternativeName>
        <fullName evidence="1">Undecaprenyl-PP-MurNAc-pentapeptide-UDPGlcNAc GlcNAc transferase</fullName>
    </alternativeName>
</protein>
<feature type="chain" id="PRO_0000225057" description="UDP-N-acetylglucosamine--N-acetylmuramyl-(pentapeptide) pyrophosphoryl-undecaprenol N-acetylglucosamine transferase">
    <location>
        <begin position="1"/>
        <end position="365"/>
    </location>
</feature>
<feature type="binding site" evidence="1">
    <location>
        <begin position="12"/>
        <end position="14"/>
    </location>
    <ligand>
        <name>UDP-N-acetyl-alpha-D-glucosamine</name>
        <dbReference type="ChEBI" id="CHEBI:57705"/>
    </ligand>
</feature>
<feature type="binding site" evidence="1">
    <location>
        <position position="128"/>
    </location>
    <ligand>
        <name>UDP-N-acetyl-alpha-D-glucosamine</name>
        <dbReference type="ChEBI" id="CHEBI:57705"/>
    </ligand>
</feature>
<feature type="binding site" evidence="1">
    <location>
        <position position="169"/>
    </location>
    <ligand>
        <name>UDP-N-acetyl-alpha-D-glucosamine</name>
        <dbReference type="ChEBI" id="CHEBI:57705"/>
    </ligand>
</feature>
<feature type="binding site" evidence="1">
    <location>
        <position position="195"/>
    </location>
    <ligand>
        <name>UDP-N-acetyl-alpha-D-glucosamine</name>
        <dbReference type="ChEBI" id="CHEBI:57705"/>
    </ligand>
</feature>
<feature type="binding site" evidence="1">
    <location>
        <position position="296"/>
    </location>
    <ligand>
        <name>UDP-N-acetyl-alpha-D-glucosamine</name>
        <dbReference type="ChEBI" id="CHEBI:57705"/>
    </ligand>
</feature>
<keyword id="KW-0131">Cell cycle</keyword>
<keyword id="KW-0132">Cell division</keyword>
<keyword id="KW-0997">Cell inner membrane</keyword>
<keyword id="KW-1003">Cell membrane</keyword>
<keyword id="KW-0133">Cell shape</keyword>
<keyword id="KW-0961">Cell wall biogenesis/degradation</keyword>
<keyword id="KW-0328">Glycosyltransferase</keyword>
<keyword id="KW-0472">Membrane</keyword>
<keyword id="KW-0573">Peptidoglycan synthesis</keyword>
<keyword id="KW-1185">Reference proteome</keyword>
<keyword id="KW-0808">Transferase</keyword>
<dbReference type="EC" id="2.4.1.227" evidence="1"/>
<dbReference type="EMBL" id="CP000009">
    <property type="protein sequence ID" value="AAW59951.1"/>
    <property type="molecule type" value="Genomic_DNA"/>
</dbReference>
<dbReference type="RefSeq" id="WP_011251754.1">
    <property type="nucleotide sequence ID" value="NC_006677.1"/>
</dbReference>
<dbReference type="SMR" id="Q5FUJ5"/>
<dbReference type="STRING" id="290633.GOX0158"/>
<dbReference type="CAZy" id="GT28">
    <property type="family name" value="Glycosyltransferase Family 28"/>
</dbReference>
<dbReference type="KEGG" id="gox:GOX0158"/>
<dbReference type="eggNOG" id="COG0707">
    <property type="taxonomic scope" value="Bacteria"/>
</dbReference>
<dbReference type="HOGENOM" id="CLU_037404_2_1_5"/>
<dbReference type="UniPathway" id="UPA00219"/>
<dbReference type="Proteomes" id="UP000006375">
    <property type="component" value="Chromosome"/>
</dbReference>
<dbReference type="GO" id="GO:0005886">
    <property type="term" value="C:plasma membrane"/>
    <property type="evidence" value="ECO:0007669"/>
    <property type="project" value="UniProtKB-SubCell"/>
</dbReference>
<dbReference type="GO" id="GO:0051991">
    <property type="term" value="F:UDP-N-acetyl-D-glucosamine:N-acetylmuramoyl-L-alanyl-D-glutamyl-meso-2,6-diaminopimelyl-D-alanyl-D-alanine-diphosphoundecaprenol 4-beta-N-acetylglucosaminlytransferase activity"/>
    <property type="evidence" value="ECO:0007669"/>
    <property type="project" value="RHEA"/>
</dbReference>
<dbReference type="GO" id="GO:0050511">
    <property type="term" value="F:undecaprenyldiphospho-muramoylpentapeptide beta-N-acetylglucosaminyltransferase activity"/>
    <property type="evidence" value="ECO:0007669"/>
    <property type="project" value="UniProtKB-UniRule"/>
</dbReference>
<dbReference type="GO" id="GO:0005975">
    <property type="term" value="P:carbohydrate metabolic process"/>
    <property type="evidence" value="ECO:0007669"/>
    <property type="project" value="InterPro"/>
</dbReference>
<dbReference type="GO" id="GO:0051301">
    <property type="term" value="P:cell division"/>
    <property type="evidence" value="ECO:0007669"/>
    <property type="project" value="UniProtKB-KW"/>
</dbReference>
<dbReference type="GO" id="GO:0071555">
    <property type="term" value="P:cell wall organization"/>
    <property type="evidence" value="ECO:0007669"/>
    <property type="project" value="UniProtKB-KW"/>
</dbReference>
<dbReference type="GO" id="GO:0030259">
    <property type="term" value="P:lipid glycosylation"/>
    <property type="evidence" value="ECO:0007669"/>
    <property type="project" value="UniProtKB-UniRule"/>
</dbReference>
<dbReference type="GO" id="GO:0009252">
    <property type="term" value="P:peptidoglycan biosynthetic process"/>
    <property type="evidence" value="ECO:0007669"/>
    <property type="project" value="UniProtKB-UniRule"/>
</dbReference>
<dbReference type="GO" id="GO:0008360">
    <property type="term" value="P:regulation of cell shape"/>
    <property type="evidence" value="ECO:0007669"/>
    <property type="project" value="UniProtKB-KW"/>
</dbReference>
<dbReference type="CDD" id="cd03785">
    <property type="entry name" value="GT28_MurG"/>
    <property type="match status" value="1"/>
</dbReference>
<dbReference type="Gene3D" id="3.40.50.2000">
    <property type="entry name" value="Glycogen Phosphorylase B"/>
    <property type="match status" value="2"/>
</dbReference>
<dbReference type="HAMAP" id="MF_00033">
    <property type="entry name" value="MurG"/>
    <property type="match status" value="1"/>
</dbReference>
<dbReference type="InterPro" id="IPR006009">
    <property type="entry name" value="GlcNAc_MurG"/>
</dbReference>
<dbReference type="InterPro" id="IPR007235">
    <property type="entry name" value="Glyco_trans_28_C"/>
</dbReference>
<dbReference type="InterPro" id="IPR004276">
    <property type="entry name" value="GlycoTrans_28_N"/>
</dbReference>
<dbReference type="NCBIfam" id="TIGR01133">
    <property type="entry name" value="murG"/>
    <property type="match status" value="1"/>
</dbReference>
<dbReference type="PANTHER" id="PTHR21015:SF22">
    <property type="entry name" value="GLYCOSYLTRANSFERASE"/>
    <property type="match status" value="1"/>
</dbReference>
<dbReference type="PANTHER" id="PTHR21015">
    <property type="entry name" value="UDP-N-ACETYLGLUCOSAMINE--N-ACETYLMURAMYL-(PENTAPEPTIDE) PYROPHOSPHORYL-UNDECAPRENOL N-ACETYLGLUCOSAMINE TRANSFERASE 1"/>
    <property type="match status" value="1"/>
</dbReference>
<dbReference type="Pfam" id="PF04101">
    <property type="entry name" value="Glyco_tran_28_C"/>
    <property type="match status" value="1"/>
</dbReference>
<dbReference type="Pfam" id="PF03033">
    <property type="entry name" value="Glyco_transf_28"/>
    <property type="match status" value="1"/>
</dbReference>
<dbReference type="SUPFAM" id="SSF53756">
    <property type="entry name" value="UDP-Glycosyltransferase/glycogen phosphorylase"/>
    <property type="match status" value="1"/>
</dbReference>
<evidence type="ECO:0000255" key="1">
    <source>
        <dbReference type="HAMAP-Rule" id="MF_00033"/>
    </source>
</evidence>
<accession>Q5FUJ5</accession>
<name>MURG_GLUOX</name>
<comment type="function">
    <text evidence="1">Cell wall formation. Catalyzes the transfer of a GlcNAc subunit on undecaprenyl-pyrophosphoryl-MurNAc-pentapeptide (lipid intermediate I) to form undecaprenyl-pyrophosphoryl-MurNAc-(pentapeptide)GlcNAc (lipid intermediate II).</text>
</comment>
<comment type="catalytic activity">
    <reaction evidence="1">
        <text>di-trans,octa-cis-undecaprenyl diphospho-N-acetyl-alpha-D-muramoyl-L-alanyl-D-glutamyl-meso-2,6-diaminopimeloyl-D-alanyl-D-alanine + UDP-N-acetyl-alpha-D-glucosamine = di-trans,octa-cis-undecaprenyl diphospho-[N-acetyl-alpha-D-glucosaminyl-(1-&gt;4)]-N-acetyl-alpha-D-muramoyl-L-alanyl-D-glutamyl-meso-2,6-diaminopimeloyl-D-alanyl-D-alanine + UDP + H(+)</text>
        <dbReference type="Rhea" id="RHEA:31227"/>
        <dbReference type="ChEBI" id="CHEBI:15378"/>
        <dbReference type="ChEBI" id="CHEBI:57705"/>
        <dbReference type="ChEBI" id="CHEBI:58223"/>
        <dbReference type="ChEBI" id="CHEBI:61387"/>
        <dbReference type="ChEBI" id="CHEBI:61388"/>
        <dbReference type="EC" id="2.4.1.227"/>
    </reaction>
</comment>
<comment type="pathway">
    <text evidence="1">Cell wall biogenesis; peptidoglycan biosynthesis.</text>
</comment>
<comment type="subcellular location">
    <subcellularLocation>
        <location evidence="1">Cell inner membrane</location>
        <topology evidence="1">Peripheral membrane protein</topology>
        <orientation evidence="1">Cytoplasmic side</orientation>
    </subcellularLocation>
</comment>
<comment type="similarity">
    <text evidence="1">Belongs to the glycosyltransferase 28 family. MurG subfamily.</text>
</comment>
<gene>
    <name evidence="1" type="primary">murG</name>
    <name type="ordered locus">GOX0158</name>
</gene>
<sequence length="365" mass="38439">MNRPIVIAAGGTGGHFFPAEAVATVLAERGHDLVLMTDARHGRRETGLFKDRPQYVLDGAGVAGKGLSGKVHGVLALLRGMMEARRILASLDAAAVVGFGGYPSIPPLTASRLLPSAKRPQMVIHEGNAVLGQANAFLSRFSPLIATSYAKVARLPENARTTLTGMPVREGIEALFGHVYAPPEDRINLLVWGGSLGARVFSEIVPQALAALSEDFRKRLKVTQQIKADDLERVRAIYENAGIEVEAAPFFTNVPACLKNAHLVIGRAGGSSVAELAMAGLPSILVPLPIAASDEQGANGQALVDAGAAWMIRQPDFTAAALTALLTDLFSHPEKLENAAKAAHLCARPHAAAKVADLIESALRS</sequence>
<organism>
    <name type="scientific">Gluconobacter oxydans (strain 621H)</name>
    <name type="common">Gluconobacter suboxydans</name>
    <dbReference type="NCBI Taxonomy" id="290633"/>
    <lineage>
        <taxon>Bacteria</taxon>
        <taxon>Pseudomonadati</taxon>
        <taxon>Pseudomonadota</taxon>
        <taxon>Alphaproteobacteria</taxon>
        <taxon>Acetobacterales</taxon>
        <taxon>Acetobacteraceae</taxon>
        <taxon>Gluconobacter</taxon>
    </lineage>
</organism>
<proteinExistence type="inferred from homology"/>